<sequence>MAALAGEDKDVDAFLADCTASGDAAYGAAKAVLERLHAPATRPAARRLLGAVRRRFAASRAAGEDCFRTFHFRIHDVVLDPHVQGFQQMKKLTMMEIPSIFIPEDWSFTFYEGLNRHPDSIFRDKTVAELGCGNGWISIALAEKWCPSKVYGLDINPRAVKIAWINLYLNALDDDGLPIYDGEGKTLLDRVEFYESDLLSYCRDNKIELDRIVGCIPQILNPNPEAMSKIVTENSSEEFLYALSNYCALQGFVEDQFGLGLIARAVEEGISVIKPSGIMVFNMGGRPGQGVCERLFRRRGFRITKLWQTKIMQXADTDISALVEXEKNSRHRFEFFMDLVGBQPICARTAWAYMKSGGHISHALSVYSCQLRQPNQVKKIFEFLKDGFHEVSSSLDLSFDDDSVAEEKIPFLAYLASFLKENKSNPCEPPAGCLNFRKLVAGFMKSYHHIPLTPDNVVVFPSRSVAIENALQLFSPALAIVDEHLTRHLPKQWLTSLAIEGRADCNHADGTVTVIEAPRQSDLLIELIRKLQPQVVVTGMAQFEAITSAAFENLLNVTKDVGSRLFLDISEHLELSSLPSSNGVLKYLAGKTLPSHAAILCGLVKNQVYSDLEVAFAISEDAAVYKALSQTIELLEGHTSLISQHYYGCLFHELLAFQIADRHPQQERQPAEVIPQQMIGFSDPAVSTLKATEFFVPGSAESSIIHMDLDRSFLPVPSAVNASVFESFVRQNITDSETDVRSSIQQLVKDSYGLSAAGCAEIIYGNTSVALFNKLVLCCMQEQGTLLFPLGTNGHYVSAAKFVNASTVTIPTNPSSGFRIEPKVLADTLKNVSRPWVYVCGPTINPTGFLYSDSDIRELLSVCAEYGARVVIDTSFSGLEYETDGWRQWNLAGCLSSLKRSEPSFSVVLLGELSFALTAGGHDFGFVILGDSSLAETFHSFSSLSRPHTTLKYTFKKLLGLKNQKDQHFSDLIVEQKEELKNRANQLIQTLESCGWEAAIGCGGISMLAKPTAYMGKAFKAAGFDGELDASNIREAILRATGLCINSSSWTGIPGYCRFSFALERGEFERAMGCIARFKELVLGGAQMNGA</sequence>
<keyword id="KW-0963">Cytoplasm</keyword>
<keyword id="KW-0489">Methyltransferase</keyword>
<keyword id="KW-1185">Reference proteome</keyword>
<keyword id="KW-0949">S-adenosyl-L-methionine</keyword>
<keyword id="KW-0808">Transferase</keyword>
<protein>
    <recommendedName>
        <fullName>Methionine S-methyltransferase</fullName>
        <ecNumber>2.1.1.12</ecNumber>
    </recommendedName>
    <alternativeName>
        <fullName>AdoMet:Met S-methyltransferase</fullName>
    </alternativeName>
</protein>
<reference key="1">
    <citation type="journal article" date="1999" name="Plant Cell">
        <title>S-methylmethionine plays a major role in phloem sulfur transport and is synthesized by a novel type of methyltransferase.</title>
        <authorList>
            <person name="Bourgis F."/>
            <person name="Roje S."/>
            <person name="Nuccio M.L."/>
            <person name="Fisher D.B."/>
            <person name="Tarczynski M.C."/>
            <person name="Li C."/>
            <person name="Herschbach C."/>
            <person name="Rennenberg H."/>
            <person name="Pimenta M.J."/>
            <person name="Shen T.-L."/>
            <person name="Gage D.A."/>
            <person name="Hanson A.D."/>
        </authorList>
    </citation>
    <scope>NUCLEOTIDE SEQUENCE [MRNA]</scope>
</reference>
<reference key="2">
    <citation type="submission" date="2001-10" db="EMBL/GenBank/DDBJ databases">
        <title>Plant one-carbon genes.</title>
        <authorList>
            <person name="Wang H."/>
            <person name="Bohnert H."/>
        </authorList>
    </citation>
    <scope>NUCLEOTIDE SEQUENCE [MRNA] OF 520-611</scope>
</reference>
<reference key="3">
    <citation type="journal article" date="2003" name="Plant Physiol.">
        <title>Insertional inactivation of the methionine s-methyltransferase gene eliminates the s-methylmethionine cycle and increases the methylation ratio.</title>
        <authorList>
            <person name="Kocsis M.G."/>
            <person name="Ranocha P."/>
            <person name="Gage D.A."/>
            <person name="Simon E.S."/>
            <person name="Rhodes D."/>
            <person name="Peel G.J."/>
            <person name="Mellema S."/>
            <person name="Saito K."/>
            <person name="Awazuhara M."/>
            <person name="Li C."/>
            <person name="Meeley R.B."/>
            <person name="Tarczynski M.C."/>
            <person name="Wagner C."/>
            <person name="Hanson A.D."/>
        </authorList>
    </citation>
    <scope>PROBABLE FUNCTION OF SMM CYCLE</scope>
</reference>
<proteinExistence type="evidence at transcript level"/>
<gene>
    <name type="primary">MMT1</name>
    <name type="synonym">MMT</name>
</gene>
<dbReference type="EC" id="2.1.1.12"/>
<dbReference type="EMBL" id="AF144079">
    <property type="protein sequence ID" value="AAD34585.2"/>
    <property type="molecule type" value="mRNA"/>
</dbReference>
<dbReference type="EMBL" id="AF439733">
    <property type="protein sequence ID" value="AAL33599.1"/>
    <property type="molecule type" value="mRNA"/>
</dbReference>
<dbReference type="RefSeq" id="NP_001104941.2">
    <property type="nucleotide sequence ID" value="NM_001111471.2"/>
</dbReference>
<dbReference type="FunCoup" id="Q8W519">
    <property type="interactions" value="3182"/>
</dbReference>
<dbReference type="STRING" id="4577.Q8W519"/>
<dbReference type="PaxDb" id="4577-GRMZM2G098039_P01"/>
<dbReference type="GeneID" id="541786"/>
<dbReference type="KEGG" id="zma:541786"/>
<dbReference type="eggNOG" id="ENOG502QS81">
    <property type="taxonomic scope" value="Eukaryota"/>
</dbReference>
<dbReference type="InParanoid" id="Q8W519"/>
<dbReference type="OrthoDB" id="540004at2759"/>
<dbReference type="Proteomes" id="UP000007305">
    <property type="component" value="Unplaced"/>
</dbReference>
<dbReference type="ExpressionAtlas" id="Q8W519">
    <property type="expression patterns" value="baseline and differential"/>
</dbReference>
<dbReference type="GO" id="GO:0005737">
    <property type="term" value="C:cytoplasm"/>
    <property type="evidence" value="ECO:0007669"/>
    <property type="project" value="UniProtKB-SubCell"/>
</dbReference>
<dbReference type="GO" id="GO:0030732">
    <property type="term" value="F:methionine S-methyltransferase activity"/>
    <property type="evidence" value="ECO:0007669"/>
    <property type="project" value="UniProtKB-EC"/>
</dbReference>
<dbReference type="GO" id="GO:0030170">
    <property type="term" value="F:pyridoxal phosphate binding"/>
    <property type="evidence" value="ECO:0007669"/>
    <property type="project" value="InterPro"/>
</dbReference>
<dbReference type="GO" id="GO:0009058">
    <property type="term" value="P:biosynthetic process"/>
    <property type="evidence" value="ECO:0007669"/>
    <property type="project" value="InterPro"/>
</dbReference>
<dbReference type="GO" id="GO:0032259">
    <property type="term" value="P:methylation"/>
    <property type="evidence" value="ECO:0007669"/>
    <property type="project" value="UniProtKB-KW"/>
</dbReference>
<dbReference type="CDD" id="cd02440">
    <property type="entry name" value="AdoMet_MTases"/>
    <property type="match status" value="1"/>
</dbReference>
<dbReference type="Gene3D" id="3.40.640.10">
    <property type="entry name" value="Type I PLP-dependent aspartate aminotransferase-like (Major domain)"/>
    <property type="match status" value="1"/>
</dbReference>
<dbReference type="Gene3D" id="3.40.50.150">
    <property type="entry name" value="Vaccinia Virus protein VP39"/>
    <property type="match status" value="1"/>
</dbReference>
<dbReference type="InterPro" id="IPR004839">
    <property type="entry name" value="Aminotransferase_I/II_large"/>
</dbReference>
<dbReference type="InterPro" id="IPR025779">
    <property type="entry name" value="Met_S-MeTrfase"/>
</dbReference>
<dbReference type="InterPro" id="IPR015424">
    <property type="entry name" value="PyrdxlP-dep_Trfase"/>
</dbReference>
<dbReference type="InterPro" id="IPR015421">
    <property type="entry name" value="PyrdxlP-dep_Trfase_major"/>
</dbReference>
<dbReference type="InterPro" id="IPR029063">
    <property type="entry name" value="SAM-dependent_MTases_sf"/>
</dbReference>
<dbReference type="InterPro" id="IPR007848">
    <property type="entry name" value="Small_mtfrase_dom"/>
</dbReference>
<dbReference type="PANTHER" id="PTHR47087">
    <property type="entry name" value="METHIONINE S-METHYLTRANSFERASE"/>
    <property type="match status" value="1"/>
</dbReference>
<dbReference type="PANTHER" id="PTHR47087:SF1">
    <property type="entry name" value="METHIONINE S-METHYLTRANSFERASE"/>
    <property type="match status" value="1"/>
</dbReference>
<dbReference type="Pfam" id="PF00155">
    <property type="entry name" value="Aminotran_1_2"/>
    <property type="match status" value="1"/>
</dbReference>
<dbReference type="Pfam" id="PF05175">
    <property type="entry name" value="MTS"/>
    <property type="match status" value="1"/>
</dbReference>
<dbReference type="SUPFAM" id="SSF53383">
    <property type="entry name" value="PLP-dependent transferases"/>
    <property type="match status" value="2"/>
</dbReference>
<dbReference type="SUPFAM" id="SSF53335">
    <property type="entry name" value="S-adenosyl-L-methionine-dependent methyltransferases"/>
    <property type="match status" value="1"/>
</dbReference>
<dbReference type="PROSITE" id="PS51555">
    <property type="entry name" value="SAM_MT12"/>
    <property type="match status" value="1"/>
</dbReference>
<evidence type="ECO:0000250" key="1"/>
<evidence type="ECO:0000305" key="2"/>
<accession>Q8W519</accession>
<accession>Q9XFH6</accession>
<name>MMT1_MAIZE</name>
<comment type="function">
    <text>Catalyzes the S-methylmethionine (SMM) biosynthesis from adenosyl-L-homocysteine (AdoMet) and methionine. SMM biosynthesis (by MMT1) and degradation (by HMT-1, HMT-2 and HMT-3) constitute the SMM cycle in plants, which is probably required to achieve short term control of AdoMet level. Also able to catalyze the selenium-methylmethionine (SeMM) from AdoMet and selenium-methionine (SeMet). May play a role in phoem sulfur transport; such function is however not essential.</text>
</comment>
<comment type="catalytic activity">
    <reaction>
        <text>L-methionine + S-adenosyl-L-methionine = S-methyl-L-methionine + S-adenosyl-L-homocysteine</text>
        <dbReference type="Rhea" id="RHEA:13761"/>
        <dbReference type="ChEBI" id="CHEBI:57844"/>
        <dbReference type="ChEBI" id="CHEBI:57856"/>
        <dbReference type="ChEBI" id="CHEBI:58252"/>
        <dbReference type="ChEBI" id="CHEBI:59789"/>
        <dbReference type="EC" id="2.1.1.12"/>
    </reaction>
</comment>
<comment type="subunit">
    <text evidence="1">Homotetramer.</text>
</comment>
<comment type="subcellular location">
    <subcellularLocation>
        <location evidence="1">Cytoplasm</location>
    </subcellularLocation>
</comment>
<comment type="similarity">
    <text evidence="2">Belongs to the class I-like SAM-binding methyltransferase superfamily.</text>
</comment>
<feature type="chain" id="PRO_0000204462" description="Methionine S-methyltransferase">
    <location>
        <begin position="1"/>
        <end position="1091"/>
    </location>
</feature>
<feature type="sequence conflict" description="In Ref. 2; AAL33599." evidence="2" ref="2">
    <original>LI</original>
    <variation>MV</variation>
    <location>
        <begin position="524"/>
        <end position="525"/>
    </location>
</feature>
<feature type="sequence conflict" description="In Ref. 2; AAL33599." evidence="2" ref="2">
    <original>YSD</original>
    <variation>ITS</variation>
    <location>
        <begin position="609"/>
        <end position="611"/>
    </location>
</feature>
<organism>
    <name type="scientific">Zea mays</name>
    <name type="common">Maize</name>
    <dbReference type="NCBI Taxonomy" id="4577"/>
    <lineage>
        <taxon>Eukaryota</taxon>
        <taxon>Viridiplantae</taxon>
        <taxon>Streptophyta</taxon>
        <taxon>Embryophyta</taxon>
        <taxon>Tracheophyta</taxon>
        <taxon>Spermatophyta</taxon>
        <taxon>Magnoliopsida</taxon>
        <taxon>Liliopsida</taxon>
        <taxon>Poales</taxon>
        <taxon>Poaceae</taxon>
        <taxon>PACMAD clade</taxon>
        <taxon>Panicoideae</taxon>
        <taxon>Andropogonodae</taxon>
        <taxon>Andropogoneae</taxon>
        <taxon>Tripsacinae</taxon>
        <taxon>Zea</taxon>
    </lineage>
</organism>